<protein>
    <recommendedName>
        <fullName evidence="1">Glucose-1-phosphate adenylyltransferase</fullName>
        <ecNumber evidence="1">2.7.7.27</ecNumber>
    </recommendedName>
    <alternativeName>
        <fullName evidence="1">ADP-glucose pyrophosphorylase</fullName>
        <shortName evidence="1">ADPGlc PPase</shortName>
    </alternativeName>
    <alternativeName>
        <fullName evidence="1">ADP-glucose synthase</fullName>
    </alternativeName>
</protein>
<evidence type="ECO:0000255" key="1">
    <source>
        <dbReference type="HAMAP-Rule" id="MF_00624"/>
    </source>
</evidence>
<organism>
    <name type="scientific">Yersinia pseudotuberculosis serotype I (strain IP32953)</name>
    <dbReference type="NCBI Taxonomy" id="273123"/>
    <lineage>
        <taxon>Bacteria</taxon>
        <taxon>Pseudomonadati</taxon>
        <taxon>Pseudomonadota</taxon>
        <taxon>Gammaproteobacteria</taxon>
        <taxon>Enterobacterales</taxon>
        <taxon>Yersiniaceae</taxon>
        <taxon>Yersinia</taxon>
    </lineage>
</organism>
<proteinExistence type="inferred from homology"/>
<reference key="1">
    <citation type="journal article" date="2004" name="Proc. Natl. Acad. Sci. U.S.A.">
        <title>Insights into the evolution of Yersinia pestis through whole-genome comparison with Yersinia pseudotuberculosis.</title>
        <authorList>
            <person name="Chain P.S.G."/>
            <person name="Carniel E."/>
            <person name="Larimer F.W."/>
            <person name="Lamerdin J."/>
            <person name="Stoutland P.O."/>
            <person name="Regala W.M."/>
            <person name="Georgescu A.M."/>
            <person name="Vergez L.M."/>
            <person name="Land M.L."/>
            <person name="Motin V.L."/>
            <person name="Brubaker R.R."/>
            <person name="Fowler J."/>
            <person name="Hinnebusch J."/>
            <person name="Marceau M."/>
            <person name="Medigue C."/>
            <person name="Simonet M."/>
            <person name="Chenal-Francisque V."/>
            <person name="Souza B."/>
            <person name="Dacheux D."/>
            <person name="Elliott J.M."/>
            <person name="Derbise A."/>
            <person name="Hauser L.J."/>
            <person name="Garcia E."/>
        </authorList>
    </citation>
    <scope>NUCLEOTIDE SEQUENCE [LARGE SCALE GENOMIC DNA]</scope>
    <source>
        <strain>IP32953</strain>
    </source>
</reference>
<feature type="chain" id="PRO_0000195353" description="Glucose-1-phosphate adenylyltransferase">
    <location>
        <begin position="1"/>
        <end position="428"/>
    </location>
</feature>
<feature type="binding site" evidence="1">
    <location>
        <position position="114"/>
    </location>
    <ligand>
        <name>alpha-D-glucose 1-phosphate</name>
        <dbReference type="ChEBI" id="CHEBI:58601"/>
    </ligand>
</feature>
<feature type="binding site" evidence="1">
    <location>
        <position position="179"/>
    </location>
    <ligand>
        <name>alpha-D-glucose 1-phosphate</name>
        <dbReference type="ChEBI" id="CHEBI:58601"/>
    </ligand>
</feature>
<feature type="binding site" evidence="1">
    <location>
        <begin position="194"/>
        <end position="195"/>
    </location>
    <ligand>
        <name>alpha-D-glucose 1-phosphate</name>
        <dbReference type="ChEBI" id="CHEBI:58601"/>
    </ligand>
</feature>
<feature type="binding site" evidence="1">
    <location>
        <position position="212"/>
    </location>
    <ligand>
        <name>alpha-D-glucose 1-phosphate</name>
        <dbReference type="ChEBI" id="CHEBI:58601"/>
    </ligand>
</feature>
<sequence length="428" mass="47757">MVRFESTDSLMLARQLPNKTVALILAGGRGSRLKDLTATRAKPAVHFGGKFRIIDFALSNCLNSGVRRIGVITQYQSHTLVQHIQRGWSFLNEEMNEFVDLLPAQQRLSTEQWYKGTADAVCQNLDIIRRYDAEYIVILAGDHIYKMDYSRMLLDHVEKGAECTVACIPVPISEGSEFGIMEVTADYQITAFYEKPANPPPIPGDPSNALASMGIYIFNADYLFKLLEEDNNTPGSSHDFGKDIIPQLTARKVVWAHPFDLSCVTSNAELPPYWRDVGTLDAYWRANLDLASVTPELDMYDRAWPIRTHMEPLPPAKFVQDRSGSHGMTMNSLVSGGCIVSGSVVVHSVLFPRVRVNSFCTIDSSLLLPDVHVGRSCRLRRCIIDRACHIPEGMVIGENANEDSARFYRSEGGVVLVTRDMLAKLEAK</sequence>
<name>GLGC_YERPS</name>
<gene>
    <name evidence="1" type="primary">glgC</name>
    <name type="ordered locus">YPTB3785</name>
</gene>
<keyword id="KW-0067">ATP-binding</keyword>
<keyword id="KW-0119">Carbohydrate metabolism</keyword>
<keyword id="KW-0320">Glycogen biosynthesis</keyword>
<keyword id="KW-0321">Glycogen metabolism</keyword>
<keyword id="KW-0547">Nucleotide-binding</keyword>
<keyword id="KW-0548">Nucleotidyltransferase</keyword>
<keyword id="KW-0808">Transferase</keyword>
<comment type="function">
    <text evidence="1">Involved in the biosynthesis of ADP-glucose, a building block required for the elongation reactions to produce glycogen. Catalyzes the reaction between ATP and alpha-D-glucose 1-phosphate (G1P) to produce pyrophosphate and ADP-Glc.</text>
</comment>
<comment type="catalytic activity">
    <reaction evidence="1">
        <text>alpha-D-glucose 1-phosphate + ATP + H(+) = ADP-alpha-D-glucose + diphosphate</text>
        <dbReference type="Rhea" id="RHEA:12120"/>
        <dbReference type="ChEBI" id="CHEBI:15378"/>
        <dbReference type="ChEBI" id="CHEBI:30616"/>
        <dbReference type="ChEBI" id="CHEBI:33019"/>
        <dbReference type="ChEBI" id="CHEBI:57498"/>
        <dbReference type="ChEBI" id="CHEBI:58601"/>
        <dbReference type="EC" id="2.7.7.27"/>
    </reaction>
</comment>
<comment type="pathway">
    <text evidence="1">Glycan biosynthesis; glycogen biosynthesis.</text>
</comment>
<comment type="subunit">
    <text evidence="1">Homotetramer.</text>
</comment>
<comment type="similarity">
    <text evidence="1">Belongs to the bacterial/plant glucose-1-phosphate adenylyltransferase family.</text>
</comment>
<accession>Q664I4</accession>
<dbReference type="EC" id="2.7.7.27" evidence="1"/>
<dbReference type="EMBL" id="BX936398">
    <property type="protein sequence ID" value="CAH23023.1"/>
    <property type="molecule type" value="Genomic_DNA"/>
</dbReference>
<dbReference type="RefSeq" id="WP_011193249.1">
    <property type="nucleotide sequence ID" value="NC_006155.1"/>
</dbReference>
<dbReference type="SMR" id="Q664I4"/>
<dbReference type="KEGG" id="ypo:BZ17_2800"/>
<dbReference type="KEGG" id="yps:YPTB3785"/>
<dbReference type="PATRIC" id="fig|273123.14.peg.2934"/>
<dbReference type="UniPathway" id="UPA00164"/>
<dbReference type="Proteomes" id="UP000001011">
    <property type="component" value="Chromosome"/>
</dbReference>
<dbReference type="GO" id="GO:0005524">
    <property type="term" value="F:ATP binding"/>
    <property type="evidence" value="ECO:0007669"/>
    <property type="project" value="UniProtKB-KW"/>
</dbReference>
<dbReference type="GO" id="GO:0008878">
    <property type="term" value="F:glucose-1-phosphate adenylyltransferase activity"/>
    <property type="evidence" value="ECO:0007669"/>
    <property type="project" value="UniProtKB-UniRule"/>
</dbReference>
<dbReference type="GO" id="GO:0005978">
    <property type="term" value="P:glycogen biosynthetic process"/>
    <property type="evidence" value="ECO:0007669"/>
    <property type="project" value="UniProtKB-UniRule"/>
</dbReference>
<dbReference type="CDD" id="cd02508">
    <property type="entry name" value="ADP_Glucose_PP"/>
    <property type="match status" value="1"/>
</dbReference>
<dbReference type="CDD" id="cd04651">
    <property type="entry name" value="LbH_G1P_AT_C"/>
    <property type="match status" value="1"/>
</dbReference>
<dbReference type="FunFam" id="3.90.550.10:FF:000014">
    <property type="entry name" value="Glucose-1-phosphate adenylyltransferase"/>
    <property type="match status" value="1"/>
</dbReference>
<dbReference type="Gene3D" id="2.160.10.10">
    <property type="entry name" value="Hexapeptide repeat proteins"/>
    <property type="match status" value="1"/>
</dbReference>
<dbReference type="Gene3D" id="3.90.550.10">
    <property type="entry name" value="Spore Coat Polysaccharide Biosynthesis Protein SpsA, Chain A"/>
    <property type="match status" value="1"/>
</dbReference>
<dbReference type="HAMAP" id="MF_00624">
    <property type="entry name" value="GlgC"/>
    <property type="match status" value="1"/>
</dbReference>
<dbReference type="InterPro" id="IPR011831">
    <property type="entry name" value="ADP-Glc_PPase"/>
</dbReference>
<dbReference type="InterPro" id="IPR005836">
    <property type="entry name" value="ADP_Glu_pyroP_CS"/>
</dbReference>
<dbReference type="InterPro" id="IPR023049">
    <property type="entry name" value="GlgC_bac"/>
</dbReference>
<dbReference type="InterPro" id="IPR056818">
    <property type="entry name" value="GlmU/GlgC-like_hexapep"/>
</dbReference>
<dbReference type="InterPro" id="IPR005835">
    <property type="entry name" value="NTP_transferase_dom"/>
</dbReference>
<dbReference type="InterPro" id="IPR029044">
    <property type="entry name" value="Nucleotide-diphossugar_trans"/>
</dbReference>
<dbReference type="InterPro" id="IPR011004">
    <property type="entry name" value="Trimer_LpxA-like_sf"/>
</dbReference>
<dbReference type="NCBIfam" id="TIGR02091">
    <property type="entry name" value="glgC"/>
    <property type="match status" value="1"/>
</dbReference>
<dbReference type="NCBIfam" id="NF001947">
    <property type="entry name" value="PRK00725.1"/>
    <property type="match status" value="1"/>
</dbReference>
<dbReference type="NCBIfam" id="NF002023">
    <property type="entry name" value="PRK00844.1"/>
    <property type="match status" value="1"/>
</dbReference>
<dbReference type="PANTHER" id="PTHR43523:SF2">
    <property type="entry name" value="GLUCOSE-1-PHOSPHATE ADENYLYLTRANSFERASE"/>
    <property type="match status" value="1"/>
</dbReference>
<dbReference type="PANTHER" id="PTHR43523">
    <property type="entry name" value="GLUCOSE-1-PHOSPHATE ADENYLYLTRANSFERASE-RELATED"/>
    <property type="match status" value="1"/>
</dbReference>
<dbReference type="Pfam" id="PF24894">
    <property type="entry name" value="Hexapep_GlmU"/>
    <property type="match status" value="1"/>
</dbReference>
<dbReference type="Pfam" id="PF00483">
    <property type="entry name" value="NTP_transferase"/>
    <property type="match status" value="1"/>
</dbReference>
<dbReference type="SUPFAM" id="SSF53448">
    <property type="entry name" value="Nucleotide-diphospho-sugar transferases"/>
    <property type="match status" value="1"/>
</dbReference>
<dbReference type="SUPFAM" id="SSF51161">
    <property type="entry name" value="Trimeric LpxA-like enzymes"/>
    <property type="match status" value="1"/>
</dbReference>
<dbReference type="PROSITE" id="PS00808">
    <property type="entry name" value="ADP_GLC_PYROPHOSPH_1"/>
    <property type="match status" value="1"/>
</dbReference>
<dbReference type="PROSITE" id="PS00809">
    <property type="entry name" value="ADP_GLC_PYROPHOSPH_2"/>
    <property type="match status" value="1"/>
</dbReference>
<dbReference type="PROSITE" id="PS00810">
    <property type="entry name" value="ADP_GLC_PYROPHOSPH_3"/>
    <property type="match status" value="1"/>
</dbReference>